<protein>
    <recommendedName>
        <fullName evidence="1">Sulfite reductase [NADPH] hemoprotein beta-component</fullName>
        <shortName evidence="1">SiR-HP</shortName>
        <shortName evidence="1">SiRHP</shortName>
        <ecNumber evidence="1">1.8.1.2</ecNumber>
    </recommendedName>
</protein>
<reference key="1">
    <citation type="journal article" date="2006" name="J. Bacteriol.">
        <title>Genome sequence of Aeromonas hydrophila ATCC 7966T: jack of all trades.</title>
        <authorList>
            <person name="Seshadri R."/>
            <person name="Joseph S.W."/>
            <person name="Chopra A.K."/>
            <person name="Sha J."/>
            <person name="Shaw J."/>
            <person name="Graf J."/>
            <person name="Haft D.H."/>
            <person name="Wu M."/>
            <person name="Ren Q."/>
            <person name="Rosovitz M.J."/>
            <person name="Madupu R."/>
            <person name="Tallon L."/>
            <person name="Kim M."/>
            <person name="Jin S."/>
            <person name="Vuong H."/>
            <person name="Stine O.C."/>
            <person name="Ali A."/>
            <person name="Horneman A.J."/>
            <person name="Heidelberg J.F."/>
        </authorList>
    </citation>
    <scope>NUCLEOTIDE SEQUENCE [LARGE SCALE GENOMIC DNA]</scope>
    <source>
        <strain>ATCC 7966 / DSM 30187 / BCRC 13018 / CCUG 14551 / JCM 1027 / KCTC 2358 / NCIMB 9240 / NCTC 8049</strain>
    </source>
</reference>
<comment type="function">
    <text evidence="1">Component of the sulfite reductase complex that catalyzes the 6-electron reduction of sulfite to sulfide. This is one of several activities required for the biosynthesis of L-cysteine from sulfate.</text>
</comment>
<comment type="catalytic activity">
    <reaction evidence="1">
        <text>hydrogen sulfide + 3 NADP(+) + 3 H2O = sulfite + 3 NADPH + 4 H(+)</text>
        <dbReference type="Rhea" id="RHEA:13801"/>
        <dbReference type="ChEBI" id="CHEBI:15377"/>
        <dbReference type="ChEBI" id="CHEBI:15378"/>
        <dbReference type="ChEBI" id="CHEBI:17359"/>
        <dbReference type="ChEBI" id="CHEBI:29919"/>
        <dbReference type="ChEBI" id="CHEBI:57783"/>
        <dbReference type="ChEBI" id="CHEBI:58349"/>
        <dbReference type="EC" id="1.8.1.2"/>
    </reaction>
</comment>
<comment type="cofactor">
    <cofactor evidence="1">
        <name>siroheme</name>
        <dbReference type="ChEBI" id="CHEBI:60052"/>
    </cofactor>
    <text evidence="1">Binds 1 siroheme per subunit.</text>
</comment>
<comment type="cofactor">
    <cofactor evidence="1">
        <name>[4Fe-4S] cluster</name>
        <dbReference type="ChEBI" id="CHEBI:49883"/>
    </cofactor>
    <text evidence="1">Binds 1 [4Fe-4S] cluster per subunit.</text>
</comment>
<comment type="pathway">
    <text evidence="1">Sulfur metabolism; hydrogen sulfide biosynthesis; hydrogen sulfide from sulfite (NADPH route): step 1/1.</text>
</comment>
<comment type="subunit">
    <text evidence="1">Alpha(8)-beta(8). The alpha component is a flavoprotein, the beta component is a hemoprotein.</text>
</comment>
<comment type="similarity">
    <text evidence="1">Belongs to the nitrite and sulfite reductase 4Fe-4S domain family.</text>
</comment>
<accession>A0KNL0</accession>
<dbReference type="EC" id="1.8.1.2" evidence="1"/>
<dbReference type="EMBL" id="CP000462">
    <property type="protein sequence ID" value="ABK39442.1"/>
    <property type="molecule type" value="Genomic_DNA"/>
</dbReference>
<dbReference type="RefSeq" id="WP_011707137.1">
    <property type="nucleotide sequence ID" value="NC_008570.1"/>
</dbReference>
<dbReference type="RefSeq" id="YP_857861.1">
    <property type="nucleotide sequence ID" value="NC_008570.1"/>
</dbReference>
<dbReference type="SMR" id="A0KNL0"/>
<dbReference type="STRING" id="380703.AHA_3372"/>
<dbReference type="EnsemblBacteria" id="ABK39442">
    <property type="protein sequence ID" value="ABK39442"/>
    <property type="gene ID" value="AHA_3372"/>
</dbReference>
<dbReference type="GeneID" id="4490553"/>
<dbReference type="KEGG" id="aha:AHA_3372"/>
<dbReference type="PATRIC" id="fig|380703.7.peg.3371"/>
<dbReference type="eggNOG" id="COG0155">
    <property type="taxonomic scope" value="Bacteria"/>
</dbReference>
<dbReference type="HOGENOM" id="CLU_001975_3_2_6"/>
<dbReference type="OrthoDB" id="3189055at2"/>
<dbReference type="UniPathway" id="UPA00140">
    <property type="reaction ID" value="UER00207"/>
</dbReference>
<dbReference type="Proteomes" id="UP000000756">
    <property type="component" value="Chromosome"/>
</dbReference>
<dbReference type="GO" id="GO:0009337">
    <property type="term" value="C:sulfite reductase complex (NADPH)"/>
    <property type="evidence" value="ECO:0007669"/>
    <property type="project" value="InterPro"/>
</dbReference>
<dbReference type="GO" id="GO:0051539">
    <property type="term" value="F:4 iron, 4 sulfur cluster binding"/>
    <property type="evidence" value="ECO:0007669"/>
    <property type="project" value="UniProtKB-KW"/>
</dbReference>
<dbReference type="GO" id="GO:0020037">
    <property type="term" value="F:heme binding"/>
    <property type="evidence" value="ECO:0007669"/>
    <property type="project" value="InterPro"/>
</dbReference>
<dbReference type="GO" id="GO:0046872">
    <property type="term" value="F:metal ion binding"/>
    <property type="evidence" value="ECO:0007669"/>
    <property type="project" value="UniProtKB-KW"/>
</dbReference>
<dbReference type="GO" id="GO:0050661">
    <property type="term" value="F:NADP binding"/>
    <property type="evidence" value="ECO:0007669"/>
    <property type="project" value="InterPro"/>
</dbReference>
<dbReference type="GO" id="GO:0050311">
    <property type="term" value="F:sulfite reductase (ferredoxin) activity"/>
    <property type="evidence" value="ECO:0007669"/>
    <property type="project" value="TreeGrafter"/>
</dbReference>
<dbReference type="GO" id="GO:0004783">
    <property type="term" value="F:sulfite reductase (NADPH) activity"/>
    <property type="evidence" value="ECO:0007669"/>
    <property type="project" value="UniProtKB-UniRule"/>
</dbReference>
<dbReference type="GO" id="GO:0019344">
    <property type="term" value="P:cysteine biosynthetic process"/>
    <property type="evidence" value="ECO:0007669"/>
    <property type="project" value="UniProtKB-KW"/>
</dbReference>
<dbReference type="GO" id="GO:0070814">
    <property type="term" value="P:hydrogen sulfide biosynthetic process"/>
    <property type="evidence" value="ECO:0007669"/>
    <property type="project" value="UniProtKB-UniRule"/>
</dbReference>
<dbReference type="GO" id="GO:0000103">
    <property type="term" value="P:sulfate assimilation"/>
    <property type="evidence" value="ECO:0007669"/>
    <property type="project" value="UniProtKB-UniRule"/>
</dbReference>
<dbReference type="FunFam" id="3.30.413.10:FF:000003">
    <property type="entry name" value="Sulfite reductase [NADPH] hemoprotein beta-component"/>
    <property type="match status" value="1"/>
</dbReference>
<dbReference type="FunFam" id="3.30.413.10:FF:000004">
    <property type="entry name" value="Sulfite reductase [NADPH] hemoprotein beta-component"/>
    <property type="match status" value="1"/>
</dbReference>
<dbReference type="Gene3D" id="3.30.413.10">
    <property type="entry name" value="Sulfite Reductase Hemoprotein, domain 1"/>
    <property type="match status" value="2"/>
</dbReference>
<dbReference type="HAMAP" id="MF_01540">
    <property type="entry name" value="CysI"/>
    <property type="match status" value="1"/>
</dbReference>
<dbReference type="InterPro" id="IPR011786">
    <property type="entry name" value="CysI"/>
</dbReference>
<dbReference type="InterPro" id="IPR005117">
    <property type="entry name" value="NiRdtase/SiRdtase_haem-b_fer"/>
</dbReference>
<dbReference type="InterPro" id="IPR036136">
    <property type="entry name" value="Nit/Sulf_reduc_fer-like_dom_sf"/>
</dbReference>
<dbReference type="InterPro" id="IPR006067">
    <property type="entry name" value="NO2/SO3_Rdtase_4Fe4S_dom"/>
</dbReference>
<dbReference type="InterPro" id="IPR045169">
    <property type="entry name" value="NO2/SO3_Rdtase_4Fe4S_prot"/>
</dbReference>
<dbReference type="InterPro" id="IPR045854">
    <property type="entry name" value="NO2/SO3_Rdtase_4Fe4S_sf"/>
</dbReference>
<dbReference type="InterPro" id="IPR006066">
    <property type="entry name" value="NO2/SO3_Rdtase_FeS/sirohaem_BS"/>
</dbReference>
<dbReference type="NCBIfam" id="TIGR02041">
    <property type="entry name" value="CysI"/>
    <property type="match status" value="1"/>
</dbReference>
<dbReference type="NCBIfam" id="NF010029">
    <property type="entry name" value="PRK13504.1"/>
    <property type="match status" value="1"/>
</dbReference>
<dbReference type="PANTHER" id="PTHR11493:SF47">
    <property type="entry name" value="SULFITE REDUCTASE [NADPH] SUBUNIT BETA"/>
    <property type="match status" value="1"/>
</dbReference>
<dbReference type="PANTHER" id="PTHR11493">
    <property type="entry name" value="SULFITE REDUCTASE [NADPH] SUBUNIT BETA-RELATED"/>
    <property type="match status" value="1"/>
</dbReference>
<dbReference type="Pfam" id="PF01077">
    <property type="entry name" value="NIR_SIR"/>
    <property type="match status" value="1"/>
</dbReference>
<dbReference type="Pfam" id="PF03460">
    <property type="entry name" value="NIR_SIR_ferr"/>
    <property type="match status" value="2"/>
</dbReference>
<dbReference type="PRINTS" id="PR00397">
    <property type="entry name" value="SIROHAEM"/>
</dbReference>
<dbReference type="SUPFAM" id="SSF56014">
    <property type="entry name" value="Nitrite and sulphite reductase 4Fe-4S domain-like"/>
    <property type="match status" value="2"/>
</dbReference>
<dbReference type="SUPFAM" id="SSF55124">
    <property type="entry name" value="Nitrite/Sulfite reductase N-terminal domain-like"/>
    <property type="match status" value="2"/>
</dbReference>
<dbReference type="PROSITE" id="PS00365">
    <property type="entry name" value="NIR_SIR"/>
    <property type="match status" value="1"/>
</dbReference>
<gene>
    <name evidence="1" type="primary">cysI</name>
    <name type="ordered locus">AHA_3372</name>
</gene>
<evidence type="ECO:0000255" key="1">
    <source>
        <dbReference type="HAMAP-Rule" id="MF_01540"/>
    </source>
</evidence>
<proteinExistence type="inferred from homology"/>
<feature type="chain" id="PRO_0000292957" description="Sulfite reductase [NADPH] hemoprotein beta-component">
    <location>
        <begin position="1"/>
        <end position="570"/>
    </location>
</feature>
<feature type="binding site" evidence="1">
    <location>
        <position position="433"/>
    </location>
    <ligand>
        <name>[4Fe-4S] cluster</name>
        <dbReference type="ChEBI" id="CHEBI:49883"/>
    </ligand>
</feature>
<feature type="binding site" evidence="1">
    <location>
        <position position="439"/>
    </location>
    <ligand>
        <name>[4Fe-4S] cluster</name>
        <dbReference type="ChEBI" id="CHEBI:49883"/>
    </ligand>
</feature>
<feature type="binding site" evidence="1">
    <location>
        <position position="478"/>
    </location>
    <ligand>
        <name>[4Fe-4S] cluster</name>
        <dbReference type="ChEBI" id="CHEBI:49883"/>
    </ligand>
</feature>
<feature type="binding site" evidence="1">
    <location>
        <position position="482"/>
    </location>
    <ligand>
        <name>[4Fe-4S] cluster</name>
        <dbReference type="ChEBI" id="CHEBI:49883"/>
    </ligand>
</feature>
<feature type="binding site" description="axial binding residue" evidence="1">
    <location>
        <position position="482"/>
    </location>
    <ligand>
        <name>siroheme</name>
        <dbReference type="ChEBI" id="CHEBI:60052"/>
    </ligand>
    <ligandPart>
        <name>Fe</name>
        <dbReference type="ChEBI" id="CHEBI:18248"/>
    </ligandPart>
</feature>
<organism>
    <name type="scientific">Aeromonas hydrophila subsp. hydrophila (strain ATCC 7966 / DSM 30187 / BCRC 13018 / CCUG 14551 / JCM 1027 / KCTC 2358 / NCIMB 9240 / NCTC 8049)</name>
    <dbReference type="NCBI Taxonomy" id="380703"/>
    <lineage>
        <taxon>Bacteria</taxon>
        <taxon>Pseudomonadati</taxon>
        <taxon>Pseudomonadota</taxon>
        <taxon>Gammaproteobacteria</taxon>
        <taxon>Aeromonadales</taxon>
        <taxon>Aeromonadaceae</taxon>
        <taxon>Aeromonas</taxon>
    </lineage>
</organism>
<sequence length="570" mass="62961">MSKQLIPGPVEGPLADNERLKRESDHLRGTIAQDLTDPLTGGFNGDNFQLIRFHGMYQQDDRDIRPERTAQKLEPLHNVMLRARLPGGIITPAQWQVIDKFAEDHSLYGSIRLTTRQTFQFHGVLKRDIKMMHQTLNSTGIDSIATAGDVNRNVLCTSNPVESELHQEAYEWAKKISEHLLPKTRAYVEIWLDGEKLGGDEEPILGSNYLPRKFKTTVVIPPHNDVDIHANDLNFVAISDHGKLVGFNVLVGGGLAMTHGDTSTYPRKASDFGFVPLSHVLEVAAAVVSTQRDWGNRVNRKNAKTKYTLERVGVEAFKAEVESRAGIQFGPVRPYEFTSRGDRFGWVEGIDGKHHLTLFIENGRLLDFPGKPLKTGMLEIAKVHQGDFRLTANQNLIIAGVPAGEKARIEALARQYGLLDDGVSEQRKQSMACVALPTCPLAMAEAERMLPAFVTDIEGLLAKHELANDAIIFRVTGCPNGCGRAMLAEVGLVGKAPGRYNLHLGGNLEGTRIPRLHLENITEPQILAELDALIGRWAKDRNAGECFGDFVIRAGIIAPVIDSARDFYAA</sequence>
<name>CYSI_AERHH</name>
<keyword id="KW-0004">4Fe-4S</keyword>
<keyword id="KW-0028">Amino-acid biosynthesis</keyword>
<keyword id="KW-0198">Cysteine biosynthesis</keyword>
<keyword id="KW-0349">Heme</keyword>
<keyword id="KW-0408">Iron</keyword>
<keyword id="KW-0411">Iron-sulfur</keyword>
<keyword id="KW-0479">Metal-binding</keyword>
<keyword id="KW-0521">NADP</keyword>
<keyword id="KW-0560">Oxidoreductase</keyword>
<keyword id="KW-1185">Reference proteome</keyword>